<dbReference type="EC" id="2.7.7.6" evidence="1"/>
<dbReference type="EMBL" id="AP006878">
    <property type="protein sequence ID" value="BAD84805.1"/>
    <property type="molecule type" value="Genomic_DNA"/>
</dbReference>
<dbReference type="RefSeq" id="WP_011249567.1">
    <property type="nucleotide sequence ID" value="NC_006624.1"/>
</dbReference>
<dbReference type="PDB" id="4QIW">
    <property type="method" value="X-ray"/>
    <property type="resolution" value="3.50 A"/>
    <property type="chains" value="P/W=1-49"/>
</dbReference>
<dbReference type="PDB" id="6KF3">
    <property type="method" value="EM"/>
    <property type="resolution" value="3.90 A"/>
    <property type="chains" value="P=1-49"/>
</dbReference>
<dbReference type="PDB" id="6KF4">
    <property type="method" value="EM"/>
    <property type="resolution" value="3.97 A"/>
    <property type="chains" value="P=1-49"/>
</dbReference>
<dbReference type="PDB" id="6KF9">
    <property type="method" value="EM"/>
    <property type="resolution" value="3.79 A"/>
    <property type="chains" value="P=1-49"/>
</dbReference>
<dbReference type="PDB" id="9BCT">
    <property type="method" value="EM"/>
    <property type="resolution" value="2.50 A"/>
    <property type="chains" value="P=1-49"/>
</dbReference>
<dbReference type="PDB" id="9BCU">
    <property type="method" value="EM"/>
    <property type="resolution" value="2.20 A"/>
    <property type="chains" value="P=1-49"/>
</dbReference>
<dbReference type="PDBsum" id="4QIW"/>
<dbReference type="PDBsum" id="6KF3"/>
<dbReference type="PDBsum" id="6KF4"/>
<dbReference type="PDBsum" id="6KF9"/>
<dbReference type="PDBsum" id="9BCT"/>
<dbReference type="PDBsum" id="9BCU"/>
<dbReference type="EMDB" id="EMD-44438"/>
<dbReference type="EMDB" id="EMD-44439"/>
<dbReference type="SMR" id="Q5JDM8"/>
<dbReference type="STRING" id="69014.TK0616"/>
<dbReference type="EnsemblBacteria" id="BAD84805">
    <property type="protein sequence ID" value="BAD84805"/>
    <property type="gene ID" value="TK0616"/>
</dbReference>
<dbReference type="GeneID" id="78447131"/>
<dbReference type="KEGG" id="tko:TK0616"/>
<dbReference type="PATRIC" id="fig|69014.16.peg.597"/>
<dbReference type="eggNOG" id="arCOG04341">
    <property type="taxonomic scope" value="Archaea"/>
</dbReference>
<dbReference type="HOGENOM" id="CLU_179456_2_1_2"/>
<dbReference type="InParanoid" id="Q5JDM8"/>
<dbReference type="OrthoDB" id="129238at2157"/>
<dbReference type="PhylomeDB" id="Q5JDM8"/>
<dbReference type="Proteomes" id="UP000000536">
    <property type="component" value="Chromosome"/>
</dbReference>
<dbReference type="GO" id="GO:0005694">
    <property type="term" value="C:chromosome"/>
    <property type="evidence" value="ECO:0007669"/>
    <property type="project" value="UniProtKB-SubCell"/>
</dbReference>
<dbReference type="GO" id="GO:0005737">
    <property type="term" value="C:cytoplasm"/>
    <property type="evidence" value="ECO:0007669"/>
    <property type="project" value="UniProtKB-SubCell"/>
</dbReference>
<dbReference type="GO" id="GO:0000428">
    <property type="term" value="C:DNA-directed RNA polymerase complex"/>
    <property type="evidence" value="ECO:0007669"/>
    <property type="project" value="UniProtKB-KW"/>
</dbReference>
<dbReference type="GO" id="GO:0003677">
    <property type="term" value="F:DNA binding"/>
    <property type="evidence" value="ECO:0007669"/>
    <property type="project" value="InterPro"/>
</dbReference>
<dbReference type="GO" id="GO:0003899">
    <property type="term" value="F:DNA-directed RNA polymerase activity"/>
    <property type="evidence" value="ECO:0007669"/>
    <property type="project" value="UniProtKB-UniRule"/>
</dbReference>
<dbReference type="GO" id="GO:0008270">
    <property type="term" value="F:zinc ion binding"/>
    <property type="evidence" value="ECO:0007669"/>
    <property type="project" value="UniProtKB-UniRule"/>
</dbReference>
<dbReference type="GO" id="GO:0006351">
    <property type="term" value="P:DNA-templated transcription"/>
    <property type="evidence" value="ECO:0007669"/>
    <property type="project" value="UniProtKB-UniRule"/>
</dbReference>
<dbReference type="Gene3D" id="2.20.28.30">
    <property type="entry name" value="RNA polymerase ii, chain L"/>
    <property type="match status" value="1"/>
</dbReference>
<dbReference type="HAMAP" id="MF_00615">
    <property type="entry name" value="RNApol_arch_Rpo12"/>
    <property type="match status" value="1"/>
</dbReference>
<dbReference type="InterPro" id="IPR006591">
    <property type="entry name" value="RNAP_P/RPABC4"/>
</dbReference>
<dbReference type="InterPro" id="IPR029040">
    <property type="entry name" value="RPABC4/Spt4"/>
</dbReference>
<dbReference type="InterPro" id="IPR023464">
    <property type="entry name" value="Rpo12"/>
</dbReference>
<dbReference type="NCBIfam" id="NF001607">
    <property type="entry name" value="PRK00398.1-4"/>
    <property type="match status" value="1"/>
</dbReference>
<dbReference type="Pfam" id="PF03604">
    <property type="entry name" value="Zn_ribbon_RPAB4"/>
    <property type="match status" value="1"/>
</dbReference>
<dbReference type="SMART" id="SM00659">
    <property type="entry name" value="RPOLCX"/>
    <property type="match status" value="1"/>
</dbReference>
<dbReference type="SUPFAM" id="SSF63393">
    <property type="entry name" value="RNA polymerase subunits"/>
    <property type="match status" value="1"/>
</dbReference>
<comment type="function">
    <text evidence="1">DNA-dependent RNA polymerase (RNAP) catalyzes the transcription of DNA into RNA using the four ribonucleoside triphosphates as substrates.</text>
</comment>
<comment type="catalytic activity">
    <reaction evidence="1">
        <text>RNA(n) + a ribonucleoside 5'-triphosphate = RNA(n+1) + diphosphate</text>
        <dbReference type="Rhea" id="RHEA:21248"/>
        <dbReference type="Rhea" id="RHEA-COMP:14527"/>
        <dbReference type="Rhea" id="RHEA-COMP:17342"/>
        <dbReference type="ChEBI" id="CHEBI:33019"/>
        <dbReference type="ChEBI" id="CHEBI:61557"/>
        <dbReference type="ChEBI" id="CHEBI:140395"/>
        <dbReference type="EC" id="2.7.7.6"/>
    </reaction>
</comment>
<comment type="cofactor">
    <cofactor evidence="1">
        <name>Zn(2+)</name>
        <dbReference type="ChEBI" id="CHEBI:29105"/>
    </cofactor>
    <text evidence="1">Binds 1 zinc ion.</text>
</comment>
<comment type="subunit">
    <text evidence="1">Part of the RNA polymerase complex.</text>
</comment>
<comment type="subcellular location">
    <subcellularLocation>
        <location evidence="1 3">Cytoplasm</location>
    </subcellularLocation>
    <subcellularLocation>
        <location evidence="2">Chromosome</location>
    </subcellularLocation>
</comment>
<comment type="similarity">
    <text evidence="1">Belongs to the archaeal Rpo12/eukaryotic RPC10 RNA polymerase subunit family.</text>
</comment>
<name>RPO12_THEKO</name>
<keyword id="KW-0002">3D-structure</keyword>
<keyword id="KW-0158">Chromosome</keyword>
<keyword id="KW-0963">Cytoplasm</keyword>
<keyword id="KW-0240">DNA-directed RNA polymerase</keyword>
<keyword id="KW-0479">Metal-binding</keyword>
<keyword id="KW-0548">Nucleotidyltransferase</keyword>
<keyword id="KW-1185">Reference proteome</keyword>
<keyword id="KW-0804">Transcription</keyword>
<keyword id="KW-0808">Transferase</keyword>
<keyword id="KW-0862">Zinc</keyword>
<sequence length="49" mass="5542">MATAVYRCAKCGKEVELDLATAREVRCPYCGSKILYKPRPRVARRVKAI</sequence>
<reference key="1">
    <citation type="journal article" date="2005" name="Genome Res.">
        <title>Complete genome sequence of the hyperthermophilic archaeon Thermococcus kodakaraensis KOD1 and comparison with Pyrococcus genomes.</title>
        <authorList>
            <person name="Fukui T."/>
            <person name="Atomi H."/>
            <person name="Kanai T."/>
            <person name="Matsumi R."/>
            <person name="Fujiwara S."/>
            <person name="Imanaka T."/>
        </authorList>
    </citation>
    <scope>NUCLEOTIDE SEQUENCE [LARGE SCALE GENOMIC DNA]</scope>
    <source>
        <strain>ATCC BAA-918 / JCM 12380 / KOD1</strain>
    </source>
</reference>
<reference key="2">
    <citation type="journal article" date="2011" name="Mol. Biol. Cell">
        <title>Histone and TK0471/TrmBL2 form a novel heterogeneous genome architecture in the hyperthermophilic archaeon Thermococcus kodakarensis.</title>
        <authorList>
            <person name="Maruyama H."/>
            <person name="Shin M."/>
            <person name="Oda T."/>
            <person name="Matsumi R."/>
            <person name="Ohniwa R.L."/>
            <person name="Itoh T."/>
            <person name="Shirahige K."/>
            <person name="Imanaka T."/>
            <person name="Atomi H."/>
            <person name="Yoshimura S.H."/>
            <person name="Takeyasu K."/>
        </authorList>
    </citation>
    <scope>IDENTIFICATION BY MASS SPECTROMETRY</scope>
    <scope>SUBCELLULAR LOCATION</scope>
    <source>
        <strain>ATCC BAA-918 / JCM 12380 / KOD1</strain>
    </source>
</reference>
<gene>
    <name evidence="1" type="primary">rpo12</name>
    <name evidence="1" type="synonym">rpoP</name>
    <name type="ordered locus">TK0616</name>
</gene>
<protein>
    <recommendedName>
        <fullName evidence="1">DNA-directed RNA polymerase subunit Rpo12</fullName>
        <ecNumber evidence="1">2.7.7.6</ecNumber>
    </recommendedName>
    <alternativeName>
        <fullName evidence="1">DNA-directed RNA polymerase subunit P</fullName>
    </alternativeName>
</protein>
<accession>Q5JDM8</accession>
<organism>
    <name type="scientific">Thermococcus kodakarensis (strain ATCC BAA-918 / JCM 12380 / KOD1)</name>
    <name type="common">Pyrococcus kodakaraensis (strain KOD1)</name>
    <dbReference type="NCBI Taxonomy" id="69014"/>
    <lineage>
        <taxon>Archaea</taxon>
        <taxon>Methanobacteriati</taxon>
        <taxon>Methanobacteriota</taxon>
        <taxon>Thermococci</taxon>
        <taxon>Thermococcales</taxon>
        <taxon>Thermococcaceae</taxon>
        <taxon>Thermococcus</taxon>
    </lineage>
</organism>
<feature type="chain" id="PRO_0000159765" description="DNA-directed RNA polymerase subunit Rpo12">
    <location>
        <begin position="1"/>
        <end position="49"/>
    </location>
</feature>
<feature type="binding site" evidence="1">
    <location>
        <position position="11"/>
    </location>
    <ligand>
        <name>Zn(2+)</name>
        <dbReference type="ChEBI" id="CHEBI:29105"/>
    </ligand>
</feature>
<feature type="binding site" evidence="1">
    <location>
        <position position="27"/>
    </location>
    <ligand>
        <name>Zn(2+)</name>
        <dbReference type="ChEBI" id="CHEBI:29105"/>
    </ligand>
</feature>
<feature type="binding site" evidence="1">
    <location>
        <position position="30"/>
    </location>
    <ligand>
        <name>Zn(2+)</name>
        <dbReference type="ChEBI" id="CHEBI:29105"/>
    </ligand>
</feature>
<feature type="strand" evidence="4">
    <location>
        <begin position="4"/>
        <end position="11"/>
    </location>
</feature>
<feature type="strand" evidence="4">
    <location>
        <begin position="14"/>
        <end position="17"/>
    </location>
</feature>
<feature type="turn" evidence="4">
    <location>
        <begin position="28"/>
        <end position="30"/>
    </location>
</feature>
<feature type="strand" evidence="4">
    <location>
        <begin position="44"/>
        <end position="47"/>
    </location>
</feature>
<evidence type="ECO:0000255" key="1">
    <source>
        <dbReference type="HAMAP-Rule" id="MF_00615"/>
    </source>
</evidence>
<evidence type="ECO:0000269" key="2">
    <source>
    </source>
</evidence>
<evidence type="ECO:0000305" key="3">
    <source>
    </source>
</evidence>
<evidence type="ECO:0007829" key="4">
    <source>
        <dbReference type="PDB" id="9BCU"/>
    </source>
</evidence>
<proteinExistence type="evidence at protein level"/>